<sequence length="134" mass="14277">MDVFMKGLSMAKEGVVAAAEKTKQGVTEAAEKTKEGVLYVGSKTKEGVVQGVASVAEKTKEQASHLGGAVFSGAGNIAAATGLVKKEEFPTDLKPEEVAQEAAEEPLIEPLMEPEGESYEEQPQEEYQEYEPEA</sequence>
<comment type="function">
    <text>May be involved in neuronal plasticity.</text>
</comment>
<comment type="subcellular location">
    <subcellularLocation>
        <location>Cytoplasm</location>
    </subcellularLocation>
</comment>
<comment type="tissue specificity">
    <text>Specifically present in synapses around neurons but not in glial cells.</text>
</comment>
<comment type="PTM">
    <text evidence="1">Phosphorylated. Phosphorylation by G-protein coupled receptor kinases (GRK) is more efficient than phosphorylation by CK1, CK2 and CaM-kinase II (By similarity).</text>
</comment>
<comment type="similarity">
    <text evidence="4">Belongs to the synuclein family.</text>
</comment>
<proteinExistence type="evidence at protein level"/>
<name>SYUB_BOVIN</name>
<gene>
    <name type="primary">SNCB</name>
</gene>
<accession>P33567</accession>
<feature type="chain" id="PRO_0000184034" description="Beta-synuclein">
    <location>
        <begin position="1"/>
        <end position="134"/>
    </location>
</feature>
<feature type="repeat" description="1">
    <location>
        <begin position="20"/>
        <end position="30"/>
    </location>
</feature>
<feature type="repeat" description="2">
    <location>
        <begin position="31"/>
        <end position="41"/>
    </location>
</feature>
<feature type="repeat" description="3; approximate">
    <location>
        <begin position="42"/>
        <end position="56"/>
    </location>
</feature>
<feature type="repeat" description="4">
    <location>
        <begin position="57"/>
        <end position="67"/>
    </location>
</feature>
<feature type="region of interest" description="4 X 11 AA tandem repeats of [EGS]-K-T-K-[EQ]-[GQ]-V-X(4)">
    <location>
        <begin position="20"/>
        <end position="67"/>
    </location>
</feature>
<feature type="region of interest" description="Disordered" evidence="3">
    <location>
        <begin position="97"/>
        <end position="134"/>
    </location>
</feature>
<feature type="compositionally biased region" description="Acidic residues" evidence="3">
    <location>
        <begin position="98"/>
        <end position="134"/>
    </location>
</feature>
<feature type="modified residue" description="Phosphoserine; by BARK1, CK2 and GRK5" evidence="2">
    <location>
        <position position="118"/>
    </location>
</feature>
<protein>
    <recommendedName>
        <fullName>Beta-synuclein</fullName>
    </recommendedName>
    <alternativeName>
        <fullName>14 kDa brain-specific protein</fullName>
    </alternativeName>
    <alternativeName>
        <fullName>Phosphoneuroprotein 14</fullName>
        <shortName>PNP 14</shortName>
    </alternativeName>
</protein>
<organism>
    <name type="scientific">Bos taurus</name>
    <name type="common">Bovine</name>
    <dbReference type="NCBI Taxonomy" id="9913"/>
    <lineage>
        <taxon>Eukaryota</taxon>
        <taxon>Metazoa</taxon>
        <taxon>Chordata</taxon>
        <taxon>Craniata</taxon>
        <taxon>Vertebrata</taxon>
        <taxon>Euteleostomi</taxon>
        <taxon>Mammalia</taxon>
        <taxon>Eutheria</taxon>
        <taxon>Laurasiatheria</taxon>
        <taxon>Artiodactyla</taxon>
        <taxon>Ruminantia</taxon>
        <taxon>Pecora</taxon>
        <taxon>Bovidae</taxon>
        <taxon>Bovinae</taxon>
        <taxon>Bos</taxon>
    </lineage>
</organism>
<dbReference type="PIR" id="A60218">
    <property type="entry name" value="A60218"/>
</dbReference>
<dbReference type="PIR" id="S39046">
    <property type="entry name" value="S39046"/>
</dbReference>
<dbReference type="BMRB" id="P33567"/>
<dbReference type="FunCoup" id="P33567">
    <property type="interactions" value="217"/>
</dbReference>
<dbReference type="STRING" id="9913.ENSBTAP00000012928"/>
<dbReference type="PaxDb" id="9913-ENSBTAP00000012928"/>
<dbReference type="eggNOG" id="ENOG502S0N5">
    <property type="taxonomic scope" value="Eukaryota"/>
</dbReference>
<dbReference type="InParanoid" id="P33567"/>
<dbReference type="OrthoDB" id="9944634at2759"/>
<dbReference type="Proteomes" id="UP000009136">
    <property type="component" value="Unplaced"/>
</dbReference>
<dbReference type="GO" id="GO:0043679">
    <property type="term" value="C:axon terminus"/>
    <property type="evidence" value="ECO:0000318"/>
    <property type="project" value="GO_Central"/>
</dbReference>
<dbReference type="GO" id="GO:0005737">
    <property type="term" value="C:cytoplasm"/>
    <property type="evidence" value="ECO:0000318"/>
    <property type="project" value="GO_Central"/>
</dbReference>
<dbReference type="GO" id="GO:0043025">
    <property type="term" value="C:neuronal cell body"/>
    <property type="evidence" value="ECO:0000318"/>
    <property type="project" value="GO_Central"/>
</dbReference>
<dbReference type="GO" id="GO:1903136">
    <property type="term" value="F:cuprous ion binding"/>
    <property type="evidence" value="ECO:0000318"/>
    <property type="project" value="GO_Central"/>
</dbReference>
<dbReference type="GO" id="GO:0007268">
    <property type="term" value="P:chemical synaptic transmission"/>
    <property type="evidence" value="ECO:0000318"/>
    <property type="project" value="GO_Central"/>
</dbReference>
<dbReference type="GO" id="GO:0050808">
    <property type="term" value="P:synapse organization"/>
    <property type="evidence" value="ECO:0000318"/>
    <property type="project" value="GO_Central"/>
</dbReference>
<dbReference type="GO" id="GO:0048488">
    <property type="term" value="P:synaptic vesicle endocytosis"/>
    <property type="evidence" value="ECO:0000318"/>
    <property type="project" value="GO_Central"/>
</dbReference>
<dbReference type="FunFam" id="1.10.287.700:FF:000001">
    <property type="entry name" value="Alpha-synuclein"/>
    <property type="match status" value="1"/>
</dbReference>
<dbReference type="Gene3D" id="1.10.287.700">
    <property type="entry name" value="Helix hairpin bin"/>
    <property type="match status" value="1"/>
</dbReference>
<dbReference type="InterPro" id="IPR001058">
    <property type="entry name" value="Synuclein"/>
</dbReference>
<dbReference type="InterPro" id="IPR002461">
    <property type="entry name" value="Synuclein_beta"/>
</dbReference>
<dbReference type="PANTHER" id="PTHR13820:SF4">
    <property type="entry name" value="BETA-SYNUCLEIN"/>
    <property type="match status" value="1"/>
</dbReference>
<dbReference type="PANTHER" id="PTHR13820">
    <property type="entry name" value="SYNUCLEIN"/>
    <property type="match status" value="1"/>
</dbReference>
<dbReference type="Pfam" id="PF01387">
    <property type="entry name" value="Synuclein"/>
    <property type="match status" value="1"/>
</dbReference>
<dbReference type="PRINTS" id="PR01213">
    <property type="entry name" value="BSYNUCLEIN"/>
</dbReference>
<dbReference type="PRINTS" id="PR01211">
    <property type="entry name" value="SYNUCLEIN"/>
</dbReference>
<dbReference type="SUPFAM" id="SSF118375">
    <property type="entry name" value="Synuclein"/>
    <property type="match status" value="1"/>
</dbReference>
<keyword id="KW-0963">Cytoplasm</keyword>
<keyword id="KW-0903">Direct protein sequencing</keyword>
<keyword id="KW-0597">Phosphoprotein</keyword>
<keyword id="KW-1185">Reference proteome</keyword>
<keyword id="KW-0677">Repeat</keyword>
<evidence type="ECO:0000250" key="1"/>
<evidence type="ECO:0000250" key="2">
    <source>
        <dbReference type="UniProtKB" id="Q16143"/>
    </source>
</evidence>
<evidence type="ECO:0000256" key="3">
    <source>
        <dbReference type="SAM" id="MobiDB-lite"/>
    </source>
</evidence>
<evidence type="ECO:0000305" key="4"/>
<reference key="1">
    <citation type="journal article" date="1993" name="Eur. J. Biochem.">
        <title>A new brain-specific 14-kDa protein is a phosphoprotein. Its complete amino acid sequence and evidence for phosphorylation.</title>
        <authorList>
            <person name="Nakajo S."/>
            <person name="Tsukada K."/>
            <person name="Omata K."/>
            <person name="Nakamura Y."/>
            <person name="Nakaya K."/>
        </authorList>
    </citation>
    <scope>PROTEIN SEQUENCE</scope>
    <source>
        <tissue>Brain</tissue>
    </source>
</reference>
<reference key="2">
    <citation type="journal article" date="1990" name="J. Neurochem.">
        <title>Purification and characterization of a novel brain-specific 14-kDa protein.</title>
        <authorList>
            <person name="Nakajo S."/>
            <person name="Omata K."/>
            <person name="Aiuchi T."/>
            <person name="Shibayama T."/>
            <person name="Okahashi I."/>
            <person name="Ochiai H."/>
            <person name="Nakai Y."/>
            <person name="Nakaya K."/>
            <person name="Nakamura Y."/>
        </authorList>
    </citation>
    <scope>PARTIAL PROTEIN SEQUENCE</scope>
    <source>
        <tissue>Brain</tissue>
    </source>
</reference>